<name>YCF53_CYACA</name>
<protein>
    <recommendedName>
        <fullName>Uncharacterized protein ycf53</fullName>
    </recommendedName>
</protein>
<evidence type="ECO:0000305" key="1"/>
<geneLocation type="chloroplast"/>
<keyword id="KW-0150">Chloroplast</keyword>
<keyword id="KW-0934">Plastid</keyword>
<comment type="subcellular location">
    <subcellularLocation>
        <location>Plastid</location>
        <location>Chloroplast</location>
    </subcellularLocation>
</comment>
<comment type="similarity">
    <text evidence="1">Belongs to the ycf53 family.</text>
</comment>
<gene>
    <name type="primary">ycf53</name>
    <name type="synonym">ycf4</name>
</gene>
<organism>
    <name type="scientific">Cyanidium caldarium</name>
    <name type="common">Red alga</name>
    <dbReference type="NCBI Taxonomy" id="2771"/>
    <lineage>
        <taxon>Eukaryota</taxon>
        <taxon>Rhodophyta</taxon>
        <taxon>Bangiophyceae</taxon>
        <taxon>Cyanidiales</taxon>
        <taxon>Cyanidiaceae</taxon>
        <taxon>Cyanidium</taxon>
    </lineage>
</organism>
<dbReference type="EMBL" id="AF022186">
    <property type="protein sequence ID" value="AAB82702.1"/>
    <property type="molecule type" value="Genomic_DNA"/>
</dbReference>
<dbReference type="PIR" id="T11955">
    <property type="entry name" value="T11955"/>
</dbReference>
<dbReference type="RefSeq" id="NP_045059.1">
    <property type="nucleotide sequence ID" value="NC_001840.1"/>
</dbReference>
<dbReference type="SMR" id="O19887"/>
<dbReference type="GeneID" id="800169"/>
<dbReference type="GO" id="GO:0009507">
    <property type="term" value="C:chloroplast"/>
    <property type="evidence" value="ECO:0007669"/>
    <property type="project" value="UniProtKB-SubCell"/>
</dbReference>
<dbReference type="GO" id="GO:0046906">
    <property type="term" value="F:tetrapyrrole binding"/>
    <property type="evidence" value="ECO:0007669"/>
    <property type="project" value="TreeGrafter"/>
</dbReference>
<dbReference type="CDD" id="cd16383">
    <property type="entry name" value="GUN4"/>
    <property type="match status" value="1"/>
</dbReference>
<dbReference type="Gene3D" id="1.25.40.620">
    <property type="match status" value="1"/>
</dbReference>
<dbReference type="Gene3D" id="1.10.10.1770">
    <property type="entry name" value="Gun4-like"/>
    <property type="match status" value="1"/>
</dbReference>
<dbReference type="InterPro" id="IPR008629">
    <property type="entry name" value="GUN4-like"/>
</dbReference>
<dbReference type="InterPro" id="IPR037215">
    <property type="entry name" value="GUN4-like_sf"/>
</dbReference>
<dbReference type="PANTHER" id="PTHR34800">
    <property type="entry name" value="TETRAPYRROLE-BINDING PROTEIN, CHLOROPLASTIC"/>
    <property type="match status" value="1"/>
</dbReference>
<dbReference type="PANTHER" id="PTHR34800:SF1">
    <property type="entry name" value="TETRAPYRROLE-BINDING PROTEIN, CHLOROPLASTIC"/>
    <property type="match status" value="1"/>
</dbReference>
<dbReference type="Pfam" id="PF05419">
    <property type="entry name" value="GUN4"/>
    <property type="match status" value="1"/>
</dbReference>
<dbReference type="SUPFAM" id="SSF140869">
    <property type="entry name" value="GUN4-like"/>
    <property type="match status" value="1"/>
</dbReference>
<proteinExistence type="inferred from homology"/>
<reference key="1">
    <citation type="journal article" date="2000" name="J. Mol. Evol.">
        <title>The structure and gene repertoire of an ancient red algal plastid genome.</title>
        <authorList>
            <person name="Gloeckner G."/>
            <person name="Rosenthal A."/>
            <person name="Valentin K.-U."/>
        </authorList>
    </citation>
    <scope>NUCLEOTIDE SEQUENCE [LARGE SCALE GENOMIC DNA]</scope>
    <source>
        <strain>RK-1</strain>
    </source>
</reference>
<feature type="chain" id="PRO_0000217382" description="Uncharacterized protein ycf53">
    <location>
        <begin position="1"/>
        <end position="237"/>
    </location>
</feature>
<sequence>MNRIRFISLILNLDSCDSNIQEYSRLAYVHDLNKLMDENFVSLLLIILKLAKNSKRLQPTYHNVYLFNLLKSYALSEIDGYVLGHFSRGFVNTLMHYKNAQYETLESLLSANNFFEANKFTQQILLELAGEQSKQRNWMYFTDVHSINHQSVSDLNHLWELYSQGNFGFSIQKRIWISVNKNWKKFWKKIGWINSNSKWLKYPGEFMWAVNAPPGHLPLFNQLRGVYVLEFIFDYYL</sequence>
<accession>O19887</accession>